<accession>Q6N103</accession>
<proteinExistence type="inferred from homology"/>
<organism>
    <name type="scientific">Rhodopseudomonas palustris (strain ATCC BAA-98 / CGA009)</name>
    <dbReference type="NCBI Taxonomy" id="258594"/>
    <lineage>
        <taxon>Bacteria</taxon>
        <taxon>Pseudomonadati</taxon>
        <taxon>Pseudomonadota</taxon>
        <taxon>Alphaproteobacteria</taxon>
        <taxon>Hyphomicrobiales</taxon>
        <taxon>Nitrobacteraceae</taxon>
        <taxon>Rhodopseudomonas</taxon>
    </lineage>
</organism>
<gene>
    <name evidence="1" type="primary">nifW</name>
    <name type="ordered locus">RPA4606</name>
</gene>
<keyword id="KW-0535">Nitrogen fixation</keyword>
<evidence type="ECO:0000255" key="1">
    <source>
        <dbReference type="HAMAP-Rule" id="MF_00529"/>
    </source>
</evidence>
<sequence>MSTSAVTEPVDIVARLQSAGSAEEFFELLGVAYDPKLLNVARLHILRRMGQYLAGEDLEHLPGDEAAARCKAVLERAYADFVASSPLDQRVFKVLKDAVAPKTPKRPAFVPLDALK</sequence>
<name>NIFW_RHOPA</name>
<reference key="1">
    <citation type="journal article" date="2004" name="Nat. Biotechnol.">
        <title>Complete genome sequence of the metabolically versatile photosynthetic bacterium Rhodopseudomonas palustris.</title>
        <authorList>
            <person name="Larimer F.W."/>
            <person name="Chain P."/>
            <person name="Hauser L."/>
            <person name="Lamerdin J.E."/>
            <person name="Malfatti S."/>
            <person name="Do L."/>
            <person name="Land M.L."/>
            <person name="Pelletier D.A."/>
            <person name="Beatty J.T."/>
            <person name="Lang A.S."/>
            <person name="Tabita F.R."/>
            <person name="Gibson J.L."/>
            <person name="Hanson T.E."/>
            <person name="Bobst C."/>
            <person name="Torres y Torres J.L."/>
            <person name="Peres C."/>
            <person name="Harrison F.H."/>
            <person name="Gibson J."/>
            <person name="Harwood C.S."/>
        </authorList>
    </citation>
    <scope>NUCLEOTIDE SEQUENCE [LARGE SCALE GENOMIC DNA]</scope>
    <source>
        <strain>ATCC BAA-98 / CGA009</strain>
    </source>
</reference>
<feature type="chain" id="PRO_0000219540" description="Nitrogenase-stabilizing/protective protein NifW">
    <location>
        <begin position="1"/>
        <end position="116"/>
    </location>
</feature>
<comment type="function">
    <text evidence="1">May protect the nitrogenase Fe-Mo protein from oxidative damage.</text>
</comment>
<comment type="subunit">
    <text evidence="1">Homotrimer; associates with NifD.</text>
</comment>
<comment type="similarity">
    <text evidence="1">Belongs to the NifW family.</text>
</comment>
<dbReference type="EMBL" id="BX572607">
    <property type="protein sequence ID" value="CAE30046.1"/>
    <property type="molecule type" value="Genomic_DNA"/>
</dbReference>
<dbReference type="RefSeq" id="WP_011160138.1">
    <property type="nucleotide sequence ID" value="NZ_CP116810.1"/>
</dbReference>
<dbReference type="STRING" id="258594.RPA4606"/>
<dbReference type="GeneID" id="66895758"/>
<dbReference type="eggNOG" id="ENOG50330W8">
    <property type="taxonomic scope" value="Bacteria"/>
</dbReference>
<dbReference type="HOGENOM" id="CLU_145318_0_0_5"/>
<dbReference type="PhylomeDB" id="Q6N103"/>
<dbReference type="GO" id="GO:0009399">
    <property type="term" value="P:nitrogen fixation"/>
    <property type="evidence" value="ECO:0007669"/>
    <property type="project" value="UniProtKB-UniRule"/>
</dbReference>
<dbReference type="HAMAP" id="MF_00529">
    <property type="entry name" value="NifW"/>
    <property type="match status" value="1"/>
</dbReference>
<dbReference type="InterPro" id="IPR004893">
    <property type="entry name" value="NifW"/>
</dbReference>
<dbReference type="NCBIfam" id="NF002009">
    <property type="entry name" value="PRK00810.1"/>
    <property type="match status" value="1"/>
</dbReference>
<dbReference type="Pfam" id="PF03206">
    <property type="entry name" value="NifW"/>
    <property type="match status" value="1"/>
</dbReference>
<dbReference type="PIRSF" id="PIRSF005790">
    <property type="entry name" value="NifW"/>
    <property type="match status" value="1"/>
</dbReference>
<protein>
    <recommendedName>
        <fullName evidence="1">Nitrogenase-stabilizing/protective protein NifW</fullName>
    </recommendedName>
</protein>